<comment type="function">
    <text evidence="1">Catalyzes the conversion of acetate into acetyl-CoA (AcCoA), an essential intermediate at the junction of anabolic and catabolic pathways. AcsA undergoes a two-step reaction. In the first half reaction, AcsA combines acetate with ATP to form acetyl-adenylate (AcAMP) intermediate. In the second half reaction, it can then transfer the acetyl group from AcAMP to the sulfhydryl group of CoA, forming the product AcCoA.</text>
</comment>
<comment type="catalytic activity">
    <reaction evidence="1">
        <text>acetate + ATP + CoA = acetyl-CoA + AMP + diphosphate</text>
        <dbReference type="Rhea" id="RHEA:23176"/>
        <dbReference type="ChEBI" id="CHEBI:30089"/>
        <dbReference type="ChEBI" id="CHEBI:30616"/>
        <dbReference type="ChEBI" id="CHEBI:33019"/>
        <dbReference type="ChEBI" id="CHEBI:57287"/>
        <dbReference type="ChEBI" id="CHEBI:57288"/>
        <dbReference type="ChEBI" id="CHEBI:456215"/>
        <dbReference type="EC" id="6.2.1.1"/>
    </reaction>
</comment>
<comment type="cofactor">
    <cofactor evidence="1">
        <name>Mg(2+)</name>
        <dbReference type="ChEBI" id="CHEBI:18420"/>
    </cofactor>
</comment>
<comment type="PTM">
    <text evidence="1">Acetylated. Deacetylation by the SIR2-homolog deacetylase activates the enzyme.</text>
</comment>
<comment type="similarity">
    <text evidence="1">Belongs to the ATP-dependent AMP-binding enzyme family.</text>
</comment>
<evidence type="ECO:0000255" key="1">
    <source>
        <dbReference type="HAMAP-Rule" id="MF_01123"/>
    </source>
</evidence>
<gene>
    <name evidence="1" type="primary">acsA</name>
    <name type="ordered locus">Ssed_1863</name>
</gene>
<protein>
    <recommendedName>
        <fullName evidence="1">Acetyl-coenzyme A synthetase</fullName>
        <shortName evidence="1">AcCoA synthetase</shortName>
        <shortName evidence="1">Acs</shortName>
        <ecNumber evidence="1">6.2.1.1</ecNumber>
    </recommendedName>
    <alternativeName>
        <fullName evidence="1">Acetate--CoA ligase</fullName>
    </alternativeName>
    <alternativeName>
        <fullName evidence="1">Acyl-activating enzyme</fullName>
    </alternativeName>
</protein>
<accession>A8FUF1</accession>
<reference key="1">
    <citation type="submission" date="2007-08" db="EMBL/GenBank/DDBJ databases">
        <title>Complete sequence of Shewanella sediminis HAW-EB3.</title>
        <authorList>
            <consortium name="US DOE Joint Genome Institute"/>
            <person name="Copeland A."/>
            <person name="Lucas S."/>
            <person name="Lapidus A."/>
            <person name="Barry K."/>
            <person name="Glavina del Rio T."/>
            <person name="Dalin E."/>
            <person name="Tice H."/>
            <person name="Pitluck S."/>
            <person name="Chertkov O."/>
            <person name="Brettin T."/>
            <person name="Bruce D."/>
            <person name="Detter J.C."/>
            <person name="Han C."/>
            <person name="Schmutz J."/>
            <person name="Larimer F."/>
            <person name="Land M."/>
            <person name="Hauser L."/>
            <person name="Kyrpides N."/>
            <person name="Kim E."/>
            <person name="Zhao J.-S."/>
            <person name="Richardson P."/>
        </authorList>
    </citation>
    <scope>NUCLEOTIDE SEQUENCE [LARGE SCALE GENOMIC DNA]</scope>
    <source>
        <strain>HAW-EB3</strain>
    </source>
</reference>
<keyword id="KW-0007">Acetylation</keyword>
<keyword id="KW-0067">ATP-binding</keyword>
<keyword id="KW-0436">Ligase</keyword>
<keyword id="KW-0460">Magnesium</keyword>
<keyword id="KW-0479">Metal-binding</keyword>
<keyword id="KW-0547">Nucleotide-binding</keyword>
<keyword id="KW-1185">Reference proteome</keyword>
<organism>
    <name type="scientific">Shewanella sediminis (strain HAW-EB3)</name>
    <dbReference type="NCBI Taxonomy" id="425104"/>
    <lineage>
        <taxon>Bacteria</taxon>
        <taxon>Pseudomonadati</taxon>
        <taxon>Pseudomonadota</taxon>
        <taxon>Gammaproteobacteria</taxon>
        <taxon>Alteromonadales</taxon>
        <taxon>Shewanellaceae</taxon>
        <taxon>Shewanella</taxon>
    </lineage>
</organism>
<sequence length="650" mass="72147">MSTQSLYKVSSEIAENAHINEEQYKKMYQESIVNPEGFWREHGQRIDWIKPYTKIKKTSFDDHNLSINWFYDGTLNASANCLDRHLEKDSDKVAIIWEGDDAKDQRTITYGELHSDVCKFANALRSQGVRRGDIVTVYMPMVPEAAVVMLACARIGAVHSVVFGGFSPDSIASRVIDGKSKVIITADEGVRGGRIIPLKANIDEALSHPDVDCVEKVIVLERTGGDVNWVEGRDIKWESLMDTASEHCIPEEMGAEDPLFLLYTSGSTGNPKGVLHTTGGYMVYAAMTHEYVFDYKDGEVYWCTADVGWITGHSYMVYGPLANGATVLIHEGVPNYPTPARLGEMVDRHKVNILYTAPTLIRALMAEGKEQFADFDGSSLRIMGSVGEPINPEAWRWYNEVIGHEHCPIVDTWWQTETGGILISPLPGATDTKPGSATRPFFGVQPALVDNMGNIIDGATEGNLVILDSWPGQMRTVFGDHDRFALTYFKTFRGMYFTGDGAKRDEDGYYWITGRVDDVINVSGHRLGTAEVESALVAHEHVAEAAVVGYPHDIKGQGIYAYVTLTKGTIETEELRQELRKWVRKEIGALATPDLIQWAGGLPKTRSGKIMRRFLRKIAANEVTNLGDSSTLADPAVIDTLIESRLNRSE</sequence>
<proteinExistence type="inferred from homology"/>
<dbReference type="EC" id="6.2.1.1" evidence="1"/>
<dbReference type="EMBL" id="CP000821">
    <property type="protein sequence ID" value="ABV36474.1"/>
    <property type="molecule type" value="Genomic_DNA"/>
</dbReference>
<dbReference type="RefSeq" id="WP_012142210.1">
    <property type="nucleotide sequence ID" value="NC_009831.1"/>
</dbReference>
<dbReference type="SMR" id="A8FUF1"/>
<dbReference type="STRING" id="425104.Ssed_1863"/>
<dbReference type="KEGG" id="sse:Ssed_1863"/>
<dbReference type="eggNOG" id="COG0365">
    <property type="taxonomic scope" value="Bacteria"/>
</dbReference>
<dbReference type="HOGENOM" id="CLU_000022_3_6_6"/>
<dbReference type="OrthoDB" id="9803968at2"/>
<dbReference type="Proteomes" id="UP000002015">
    <property type="component" value="Chromosome"/>
</dbReference>
<dbReference type="GO" id="GO:0005829">
    <property type="term" value="C:cytosol"/>
    <property type="evidence" value="ECO:0007669"/>
    <property type="project" value="TreeGrafter"/>
</dbReference>
<dbReference type="GO" id="GO:0003987">
    <property type="term" value="F:acetate-CoA ligase activity"/>
    <property type="evidence" value="ECO:0007669"/>
    <property type="project" value="UniProtKB-UniRule"/>
</dbReference>
<dbReference type="GO" id="GO:0016208">
    <property type="term" value="F:AMP binding"/>
    <property type="evidence" value="ECO:0007669"/>
    <property type="project" value="InterPro"/>
</dbReference>
<dbReference type="GO" id="GO:0005524">
    <property type="term" value="F:ATP binding"/>
    <property type="evidence" value="ECO:0007669"/>
    <property type="project" value="UniProtKB-KW"/>
</dbReference>
<dbReference type="GO" id="GO:0046872">
    <property type="term" value="F:metal ion binding"/>
    <property type="evidence" value="ECO:0007669"/>
    <property type="project" value="UniProtKB-KW"/>
</dbReference>
<dbReference type="GO" id="GO:0019427">
    <property type="term" value="P:acetyl-CoA biosynthetic process from acetate"/>
    <property type="evidence" value="ECO:0007669"/>
    <property type="project" value="InterPro"/>
</dbReference>
<dbReference type="CDD" id="cd05966">
    <property type="entry name" value="ACS"/>
    <property type="match status" value="1"/>
</dbReference>
<dbReference type="FunFam" id="3.30.300.30:FF:000004">
    <property type="entry name" value="Acetyl-coenzyme A synthetase"/>
    <property type="match status" value="1"/>
</dbReference>
<dbReference type="FunFam" id="3.40.50.12780:FF:000001">
    <property type="entry name" value="Acetyl-coenzyme A synthetase"/>
    <property type="match status" value="1"/>
</dbReference>
<dbReference type="Gene3D" id="3.30.300.30">
    <property type="match status" value="1"/>
</dbReference>
<dbReference type="Gene3D" id="3.40.50.12780">
    <property type="entry name" value="N-terminal domain of ligase-like"/>
    <property type="match status" value="1"/>
</dbReference>
<dbReference type="HAMAP" id="MF_01123">
    <property type="entry name" value="Ac_CoA_synth"/>
    <property type="match status" value="1"/>
</dbReference>
<dbReference type="InterPro" id="IPR011904">
    <property type="entry name" value="Ac_CoA_lig"/>
</dbReference>
<dbReference type="InterPro" id="IPR032387">
    <property type="entry name" value="ACAS_N"/>
</dbReference>
<dbReference type="InterPro" id="IPR025110">
    <property type="entry name" value="AMP-bd_C"/>
</dbReference>
<dbReference type="InterPro" id="IPR045851">
    <property type="entry name" value="AMP-bd_C_sf"/>
</dbReference>
<dbReference type="InterPro" id="IPR020845">
    <property type="entry name" value="AMP-binding_CS"/>
</dbReference>
<dbReference type="InterPro" id="IPR000873">
    <property type="entry name" value="AMP-dep_synth/lig_dom"/>
</dbReference>
<dbReference type="InterPro" id="IPR042099">
    <property type="entry name" value="ANL_N_sf"/>
</dbReference>
<dbReference type="NCBIfam" id="TIGR02188">
    <property type="entry name" value="Ac_CoA_lig_AcsA"/>
    <property type="match status" value="1"/>
</dbReference>
<dbReference type="NCBIfam" id="NF001208">
    <property type="entry name" value="PRK00174.1"/>
    <property type="match status" value="1"/>
</dbReference>
<dbReference type="PANTHER" id="PTHR24095">
    <property type="entry name" value="ACETYL-COENZYME A SYNTHETASE"/>
    <property type="match status" value="1"/>
</dbReference>
<dbReference type="PANTHER" id="PTHR24095:SF243">
    <property type="entry name" value="ACETYL-COENZYME A SYNTHETASE"/>
    <property type="match status" value="1"/>
</dbReference>
<dbReference type="Pfam" id="PF16177">
    <property type="entry name" value="ACAS_N"/>
    <property type="match status" value="1"/>
</dbReference>
<dbReference type="Pfam" id="PF00501">
    <property type="entry name" value="AMP-binding"/>
    <property type="match status" value="1"/>
</dbReference>
<dbReference type="Pfam" id="PF13193">
    <property type="entry name" value="AMP-binding_C"/>
    <property type="match status" value="1"/>
</dbReference>
<dbReference type="SUPFAM" id="SSF56801">
    <property type="entry name" value="Acetyl-CoA synthetase-like"/>
    <property type="match status" value="1"/>
</dbReference>
<dbReference type="PROSITE" id="PS00455">
    <property type="entry name" value="AMP_BINDING"/>
    <property type="match status" value="1"/>
</dbReference>
<feature type="chain" id="PRO_1000085006" description="Acetyl-coenzyme A synthetase">
    <location>
        <begin position="1"/>
        <end position="650"/>
    </location>
</feature>
<feature type="binding site" evidence="1">
    <location>
        <begin position="191"/>
        <end position="194"/>
    </location>
    <ligand>
        <name>CoA</name>
        <dbReference type="ChEBI" id="CHEBI:57287"/>
    </ligand>
</feature>
<feature type="binding site" evidence="1">
    <location>
        <position position="311"/>
    </location>
    <ligand>
        <name>CoA</name>
        <dbReference type="ChEBI" id="CHEBI:57287"/>
    </ligand>
</feature>
<feature type="binding site" evidence="1">
    <location>
        <position position="335"/>
    </location>
    <ligand>
        <name>CoA</name>
        <dbReference type="ChEBI" id="CHEBI:57287"/>
    </ligand>
</feature>
<feature type="binding site" evidence="1">
    <location>
        <begin position="387"/>
        <end position="389"/>
    </location>
    <ligand>
        <name>ATP</name>
        <dbReference type="ChEBI" id="CHEBI:30616"/>
    </ligand>
</feature>
<feature type="binding site" evidence="1">
    <location>
        <begin position="411"/>
        <end position="416"/>
    </location>
    <ligand>
        <name>ATP</name>
        <dbReference type="ChEBI" id="CHEBI:30616"/>
    </ligand>
</feature>
<feature type="binding site" evidence="1">
    <location>
        <position position="500"/>
    </location>
    <ligand>
        <name>ATP</name>
        <dbReference type="ChEBI" id="CHEBI:30616"/>
    </ligand>
</feature>
<feature type="binding site" evidence="1">
    <location>
        <position position="515"/>
    </location>
    <ligand>
        <name>ATP</name>
        <dbReference type="ChEBI" id="CHEBI:30616"/>
    </ligand>
</feature>
<feature type="binding site" evidence="1">
    <location>
        <position position="523"/>
    </location>
    <ligand>
        <name>CoA</name>
        <dbReference type="ChEBI" id="CHEBI:57287"/>
    </ligand>
</feature>
<feature type="binding site" evidence="1">
    <location>
        <position position="526"/>
    </location>
    <ligand>
        <name>ATP</name>
        <dbReference type="ChEBI" id="CHEBI:30616"/>
    </ligand>
</feature>
<feature type="binding site" evidence="1">
    <location>
        <position position="537"/>
    </location>
    <ligand>
        <name>Mg(2+)</name>
        <dbReference type="ChEBI" id="CHEBI:18420"/>
    </ligand>
</feature>
<feature type="binding site" evidence="1">
    <location>
        <position position="539"/>
    </location>
    <ligand>
        <name>Mg(2+)</name>
        <dbReference type="ChEBI" id="CHEBI:18420"/>
    </ligand>
</feature>
<feature type="binding site" evidence="1">
    <location>
        <position position="542"/>
    </location>
    <ligand>
        <name>Mg(2+)</name>
        <dbReference type="ChEBI" id="CHEBI:18420"/>
    </ligand>
</feature>
<feature type="binding site" evidence="1">
    <location>
        <position position="584"/>
    </location>
    <ligand>
        <name>CoA</name>
        <dbReference type="ChEBI" id="CHEBI:57287"/>
    </ligand>
</feature>
<feature type="modified residue" description="N6-acetyllysine" evidence="1">
    <location>
        <position position="609"/>
    </location>
</feature>
<name>ACSA_SHESH</name>